<gene>
    <name type="primary">yeeD</name>
    <name type="ordered locus">BSU06790</name>
</gene>
<reference key="1">
    <citation type="submission" date="1997-07" db="EMBL/GenBank/DDBJ databases">
        <title>The 55-58 degree segment of the Bacillus subtilis chromosome, a region spanning from the purA gene cluster to the cotJ operon.</title>
        <authorList>
            <person name="Borriss R."/>
            <person name="Schroeter R."/>
        </authorList>
    </citation>
    <scope>NUCLEOTIDE SEQUENCE [GENOMIC DNA]</scope>
    <source>
        <strain>168</strain>
    </source>
</reference>
<reference key="2">
    <citation type="journal article" date="1997" name="Nature">
        <title>The complete genome sequence of the Gram-positive bacterium Bacillus subtilis.</title>
        <authorList>
            <person name="Kunst F."/>
            <person name="Ogasawara N."/>
            <person name="Moszer I."/>
            <person name="Albertini A.M."/>
            <person name="Alloni G."/>
            <person name="Azevedo V."/>
            <person name="Bertero M.G."/>
            <person name="Bessieres P."/>
            <person name="Bolotin A."/>
            <person name="Borchert S."/>
            <person name="Borriss R."/>
            <person name="Boursier L."/>
            <person name="Brans A."/>
            <person name="Braun M."/>
            <person name="Brignell S.C."/>
            <person name="Bron S."/>
            <person name="Brouillet S."/>
            <person name="Bruschi C.V."/>
            <person name="Caldwell B."/>
            <person name="Capuano V."/>
            <person name="Carter N.M."/>
            <person name="Choi S.-K."/>
            <person name="Codani J.-J."/>
            <person name="Connerton I.F."/>
            <person name="Cummings N.J."/>
            <person name="Daniel R.A."/>
            <person name="Denizot F."/>
            <person name="Devine K.M."/>
            <person name="Duesterhoeft A."/>
            <person name="Ehrlich S.D."/>
            <person name="Emmerson P.T."/>
            <person name="Entian K.-D."/>
            <person name="Errington J."/>
            <person name="Fabret C."/>
            <person name="Ferrari E."/>
            <person name="Foulger D."/>
            <person name="Fritz C."/>
            <person name="Fujita M."/>
            <person name="Fujita Y."/>
            <person name="Fuma S."/>
            <person name="Galizzi A."/>
            <person name="Galleron N."/>
            <person name="Ghim S.-Y."/>
            <person name="Glaser P."/>
            <person name="Goffeau A."/>
            <person name="Golightly E.J."/>
            <person name="Grandi G."/>
            <person name="Guiseppi G."/>
            <person name="Guy B.J."/>
            <person name="Haga K."/>
            <person name="Haiech J."/>
            <person name="Harwood C.R."/>
            <person name="Henaut A."/>
            <person name="Hilbert H."/>
            <person name="Holsappel S."/>
            <person name="Hosono S."/>
            <person name="Hullo M.-F."/>
            <person name="Itaya M."/>
            <person name="Jones L.-M."/>
            <person name="Joris B."/>
            <person name="Karamata D."/>
            <person name="Kasahara Y."/>
            <person name="Klaerr-Blanchard M."/>
            <person name="Klein C."/>
            <person name="Kobayashi Y."/>
            <person name="Koetter P."/>
            <person name="Koningstein G."/>
            <person name="Krogh S."/>
            <person name="Kumano M."/>
            <person name="Kurita K."/>
            <person name="Lapidus A."/>
            <person name="Lardinois S."/>
            <person name="Lauber J."/>
            <person name="Lazarevic V."/>
            <person name="Lee S.-M."/>
            <person name="Levine A."/>
            <person name="Liu H."/>
            <person name="Masuda S."/>
            <person name="Mauel C."/>
            <person name="Medigue C."/>
            <person name="Medina N."/>
            <person name="Mellado R.P."/>
            <person name="Mizuno M."/>
            <person name="Moestl D."/>
            <person name="Nakai S."/>
            <person name="Noback M."/>
            <person name="Noone D."/>
            <person name="O'Reilly M."/>
            <person name="Ogawa K."/>
            <person name="Ogiwara A."/>
            <person name="Oudega B."/>
            <person name="Park S.-H."/>
            <person name="Parro V."/>
            <person name="Pohl T.M."/>
            <person name="Portetelle D."/>
            <person name="Porwollik S."/>
            <person name="Prescott A.M."/>
            <person name="Presecan E."/>
            <person name="Pujic P."/>
            <person name="Purnelle B."/>
            <person name="Rapoport G."/>
            <person name="Rey M."/>
            <person name="Reynolds S."/>
            <person name="Rieger M."/>
            <person name="Rivolta C."/>
            <person name="Rocha E."/>
            <person name="Roche B."/>
            <person name="Rose M."/>
            <person name="Sadaie Y."/>
            <person name="Sato T."/>
            <person name="Scanlan E."/>
            <person name="Schleich S."/>
            <person name="Schroeter R."/>
            <person name="Scoffone F."/>
            <person name="Sekiguchi J."/>
            <person name="Sekowska A."/>
            <person name="Seror S.J."/>
            <person name="Serror P."/>
            <person name="Shin B.-S."/>
            <person name="Soldo B."/>
            <person name="Sorokin A."/>
            <person name="Tacconi E."/>
            <person name="Takagi T."/>
            <person name="Takahashi H."/>
            <person name="Takemaru K."/>
            <person name="Takeuchi M."/>
            <person name="Tamakoshi A."/>
            <person name="Tanaka T."/>
            <person name="Terpstra P."/>
            <person name="Tognoni A."/>
            <person name="Tosato V."/>
            <person name="Uchiyama S."/>
            <person name="Vandenbol M."/>
            <person name="Vannier F."/>
            <person name="Vassarotti A."/>
            <person name="Viari A."/>
            <person name="Wambutt R."/>
            <person name="Wedler E."/>
            <person name="Wedler H."/>
            <person name="Weitzenegger T."/>
            <person name="Winters P."/>
            <person name="Wipat A."/>
            <person name="Yamamoto H."/>
            <person name="Yamane K."/>
            <person name="Yasumoto K."/>
            <person name="Yata K."/>
            <person name="Yoshida K."/>
            <person name="Yoshikawa H.-F."/>
            <person name="Zumstein E."/>
            <person name="Yoshikawa H."/>
            <person name="Danchin A."/>
        </authorList>
    </citation>
    <scope>NUCLEOTIDE SEQUENCE [LARGE SCALE GENOMIC DNA]</scope>
    <source>
        <strain>168</strain>
    </source>
</reference>
<organism>
    <name type="scientific">Bacillus subtilis (strain 168)</name>
    <dbReference type="NCBI Taxonomy" id="224308"/>
    <lineage>
        <taxon>Bacteria</taxon>
        <taxon>Bacillati</taxon>
        <taxon>Bacillota</taxon>
        <taxon>Bacilli</taxon>
        <taxon>Bacillales</taxon>
        <taxon>Bacillaceae</taxon>
        <taxon>Bacillus</taxon>
    </lineage>
</organism>
<proteinExistence type="predicted"/>
<accession>O34950</accession>
<accession>Q7BVQ9</accession>
<name>YEED_BACSU</name>
<keyword id="KW-1185">Reference proteome</keyword>
<sequence>MTVRKELIKQINLTITVIKTINQKNPTPMVKNILKRYEEAKEFILQSSDGKFEEDLSKVRNKLDTLTRAYLESANDYMNPMLKEMHKTEKLLKEYDETTQS</sequence>
<protein>
    <recommendedName>
        <fullName>Uncharacterized protein YeeD</fullName>
    </recommendedName>
</protein>
<feature type="chain" id="PRO_0000361997" description="Uncharacterized protein YeeD">
    <location>
        <begin position="1"/>
        <end position="101"/>
    </location>
</feature>
<dbReference type="EMBL" id="AF012532">
    <property type="protein sequence ID" value="AAB66477.1"/>
    <property type="molecule type" value="Genomic_DNA"/>
</dbReference>
<dbReference type="EMBL" id="AL009126">
    <property type="protein sequence ID" value="CAB12499.1"/>
    <property type="molecule type" value="Genomic_DNA"/>
</dbReference>
<dbReference type="PIR" id="H69792">
    <property type="entry name" value="H69792"/>
</dbReference>
<dbReference type="RefSeq" id="NP_388561.1">
    <property type="nucleotide sequence ID" value="NC_000964.3"/>
</dbReference>
<dbReference type="RefSeq" id="WP_003242885.1">
    <property type="nucleotide sequence ID" value="NZ_OZ025638.1"/>
</dbReference>
<dbReference type="SMR" id="O34950"/>
<dbReference type="FunCoup" id="O34950">
    <property type="interactions" value="49"/>
</dbReference>
<dbReference type="PaxDb" id="224308-BSU06790"/>
<dbReference type="EnsemblBacteria" id="CAB12499">
    <property type="protein sequence ID" value="CAB12499"/>
    <property type="gene ID" value="BSU_06790"/>
</dbReference>
<dbReference type="GeneID" id="938755"/>
<dbReference type="KEGG" id="bsu:BSU06790"/>
<dbReference type="PATRIC" id="fig|224308.179.peg.737"/>
<dbReference type="InParanoid" id="O34950"/>
<dbReference type="OrthoDB" id="2453885at2"/>
<dbReference type="BioCyc" id="BSUB:BSU06790-MONOMER"/>
<dbReference type="Proteomes" id="UP000001570">
    <property type="component" value="Chromosome"/>
</dbReference>